<name>TI221_ARATH</name>
<reference key="1">
    <citation type="journal article" date="2007" name="Plant Physiol.">
        <title>Characterization of the preprotein and amino acid transporter gene family in Arabidopsis.</title>
        <authorList>
            <person name="Murcha M.W."/>
            <person name="Elhafez D."/>
            <person name="Lister R."/>
            <person name="Tonti-Filippini J."/>
            <person name="Baumgartner M."/>
            <person name="Philippar K."/>
            <person name="Carrie C."/>
            <person name="Mokranjac D."/>
            <person name="Soll J."/>
            <person name="Whelan J."/>
        </authorList>
    </citation>
    <scope>NUCLEOTIDE SEQUENCE [MRNA]</scope>
    <scope>FUNCTION</scope>
    <scope>SUBCELLULAR LOCATION</scope>
</reference>
<reference key="2">
    <citation type="journal article" date="2000" name="Nature">
        <title>Sequence and analysis of chromosome 3 of the plant Arabidopsis thaliana.</title>
        <authorList>
            <person name="Salanoubat M."/>
            <person name="Lemcke K."/>
            <person name="Rieger M."/>
            <person name="Ansorge W."/>
            <person name="Unseld M."/>
            <person name="Fartmann B."/>
            <person name="Valle G."/>
            <person name="Bloecker H."/>
            <person name="Perez-Alonso M."/>
            <person name="Obermaier B."/>
            <person name="Delseny M."/>
            <person name="Boutry M."/>
            <person name="Grivell L.A."/>
            <person name="Mache R."/>
            <person name="Puigdomenech P."/>
            <person name="De Simone V."/>
            <person name="Choisne N."/>
            <person name="Artiguenave F."/>
            <person name="Robert C."/>
            <person name="Brottier P."/>
            <person name="Wincker P."/>
            <person name="Cattolico L."/>
            <person name="Weissenbach J."/>
            <person name="Saurin W."/>
            <person name="Quetier F."/>
            <person name="Schaefer M."/>
            <person name="Mueller-Auer S."/>
            <person name="Gabel C."/>
            <person name="Fuchs M."/>
            <person name="Benes V."/>
            <person name="Wurmbach E."/>
            <person name="Drzonek H."/>
            <person name="Erfle H."/>
            <person name="Jordan N."/>
            <person name="Bangert S."/>
            <person name="Wiedelmann R."/>
            <person name="Kranz H."/>
            <person name="Voss H."/>
            <person name="Holland R."/>
            <person name="Brandt P."/>
            <person name="Nyakatura G."/>
            <person name="Vezzi A."/>
            <person name="D'Angelo M."/>
            <person name="Pallavicini A."/>
            <person name="Toppo S."/>
            <person name="Simionati B."/>
            <person name="Conrad A."/>
            <person name="Hornischer K."/>
            <person name="Kauer G."/>
            <person name="Loehnert T.-H."/>
            <person name="Nordsiek G."/>
            <person name="Reichelt J."/>
            <person name="Scharfe M."/>
            <person name="Schoen O."/>
            <person name="Bargues M."/>
            <person name="Terol J."/>
            <person name="Climent J."/>
            <person name="Navarro P."/>
            <person name="Collado C."/>
            <person name="Perez-Perez A."/>
            <person name="Ottenwaelder B."/>
            <person name="Duchemin D."/>
            <person name="Cooke R."/>
            <person name="Laudie M."/>
            <person name="Berger-Llauro C."/>
            <person name="Purnelle B."/>
            <person name="Masuy D."/>
            <person name="de Haan M."/>
            <person name="Maarse A.C."/>
            <person name="Alcaraz J.-P."/>
            <person name="Cottet A."/>
            <person name="Casacuberta E."/>
            <person name="Monfort A."/>
            <person name="Argiriou A."/>
            <person name="Flores M."/>
            <person name="Liguori R."/>
            <person name="Vitale D."/>
            <person name="Mannhaupt G."/>
            <person name="Haase D."/>
            <person name="Schoof H."/>
            <person name="Rudd S."/>
            <person name="Zaccaria P."/>
            <person name="Mewes H.-W."/>
            <person name="Mayer K.F.X."/>
            <person name="Kaul S."/>
            <person name="Town C.D."/>
            <person name="Koo H.L."/>
            <person name="Tallon L.J."/>
            <person name="Jenkins J."/>
            <person name="Rooney T."/>
            <person name="Rizzo M."/>
            <person name="Walts A."/>
            <person name="Utterback T."/>
            <person name="Fujii C.Y."/>
            <person name="Shea T.P."/>
            <person name="Creasy T.H."/>
            <person name="Haas B."/>
            <person name="Maiti R."/>
            <person name="Wu D."/>
            <person name="Peterson J."/>
            <person name="Van Aken S."/>
            <person name="Pai G."/>
            <person name="Militscher J."/>
            <person name="Sellers P."/>
            <person name="Gill J.E."/>
            <person name="Feldblyum T.V."/>
            <person name="Preuss D."/>
            <person name="Lin X."/>
            <person name="Nierman W.C."/>
            <person name="Salzberg S.L."/>
            <person name="White O."/>
            <person name="Venter J.C."/>
            <person name="Fraser C.M."/>
            <person name="Kaneko T."/>
            <person name="Nakamura Y."/>
            <person name="Sato S."/>
            <person name="Kato T."/>
            <person name="Asamizu E."/>
            <person name="Sasamoto S."/>
            <person name="Kimura T."/>
            <person name="Idesawa K."/>
            <person name="Kawashima K."/>
            <person name="Kishida Y."/>
            <person name="Kiyokawa C."/>
            <person name="Kohara M."/>
            <person name="Matsumoto M."/>
            <person name="Matsuno A."/>
            <person name="Muraki A."/>
            <person name="Nakayama S."/>
            <person name="Nakazaki N."/>
            <person name="Shinpo S."/>
            <person name="Takeuchi C."/>
            <person name="Wada T."/>
            <person name="Watanabe A."/>
            <person name="Yamada M."/>
            <person name="Yasuda M."/>
            <person name="Tabata S."/>
        </authorList>
    </citation>
    <scope>NUCLEOTIDE SEQUENCE [LARGE SCALE GENOMIC DNA]</scope>
    <source>
        <strain>cv. Columbia</strain>
    </source>
</reference>
<reference key="3">
    <citation type="journal article" date="2017" name="Plant J.">
        <title>Araport11: a complete reannotation of the Arabidopsis thaliana reference genome.</title>
        <authorList>
            <person name="Cheng C.Y."/>
            <person name="Krishnakumar V."/>
            <person name="Chan A.P."/>
            <person name="Thibaud-Nissen F."/>
            <person name="Schobel S."/>
            <person name="Town C.D."/>
        </authorList>
    </citation>
    <scope>GENOME REANNOTATION</scope>
    <source>
        <strain>cv. Columbia</strain>
    </source>
</reference>
<reference key="4">
    <citation type="submission" date="2007-01" db="EMBL/GenBank/DDBJ databases">
        <title>Arabidopsis ORF clones.</title>
        <authorList>
            <person name="Bautista V.R."/>
            <person name="Kim C.J."/>
            <person name="Chen H."/>
            <person name="Wu S.Y."/>
            <person name="De Los Reyes C."/>
            <person name="Ecker J.R."/>
        </authorList>
    </citation>
    <scope>NUCLEOTIDE SEQUENCE [LARGE SCALE MRNA]</scope>
</reference>
<reference key="5">
    <citation type="journal article" date="2003" name="Plant Physiol.">
        <title>Identification, expression, and import of components 17 and 23 of the inner mitochondrial membrane translocase from Arabidopsis.</title>
        <authorList>
            <person name="Murcha M.W."/>
            <person name="Lister R."/>
            <person name="Ho A.Y."/>
            <person name="Whelan J."/>
        </authorList>
    </citation>
    <scope>TISSUE SPECIFICITY</scope>
</reference>
<reference key="6">
    <citation type="journal article" date="2004" name="Plant Physiol.">
        <title>A transcriptomic and proteomic characterization of the Arabidopsis mitochondrial protein import apparatus and its response to mitochondrial dysfunction.</title>
        <authorList>
            <person name="Lister R."/>
            <person name="Chew O."/>
            <person name="Lee M.N."/>
            <person name="Heazlewood J.L."/>
            <person name="Clifton R."/>
            <person name="Parker K.L."/>
            <person name="Millar A.H."/>
            <person name="Whelan J."/>
        </authorList>
    </citation>
    <scope>TISSUE SPECIFICITY</scope>
    <scope>INDUCTION</scope>
</reference>
<reference key="7">
    <citation type="journal article" date="2005" name="Development">
        <title>Genetic and molecular identification of genes required for female gametophyte development and function in Arabidopsis.</title>
        <authorList>
            <person name="Pagnussat G.C."/>
            <person name="Yu H.-J."/>
            <person name="Ngo Q.A."/>
            <person name="Rajani S."/>
            <person name="Mayalagu S."/>
            <person name="Johnson C.S."/>
            <person name="Capron A."/>
            <person name="Xie L.-F."/>
            <person name="Ye D."/>
            <person name="Sundaresan V."/>
        </authorList>
    </citation>
    <scope>IDENTIFICATION</scope>
    <scope>DISRUPTION PHENOTYPE</scope>
</reference>
<reference key="8">
    <citation type="journal article" date="2012" name="Mol. Cell. Proteomics">
        <title>Comparative large-scale characterisation of plant vs. mammal proteins reveals similar and idiosyncratic N-alpha acetylation features.</title>
        <authorList>
            <person name="Bienvenut W.V."/>
            <person name="Sumpton D."/>
            <person name="Martinez A."/>
            <person name="Lilla S."/>
            <person name="Espagne C."/>
            <person name="Meinnel T."/>
            <person name="Giglione C."/>
        </authorList>
    </citation>
    <scope>IDENTIFICATION BY MASS SPECTROMETRY [LARGE SCALE ANALYSIS]</scope>
</reference>
<organism>
    <name type="scientific">Arabidopsis thaliana</name>
    <name type="common">Mouse-ear cress</name>
    <dbReference type="NCBI Taxonomy" id="3702"/>
    <lineage>
        <taxon>Eukaryota</taxon>
        <taxon>Viridiplantae</taxon>
        <taxon>Streptophyta</taxon>
        <taxon>Embryophyta</taxon>
        <taxon>Tracheophyta</taxon>
        <taxon>Spermatophyta</taxon>
        <taxon>Magnoliopsida</taxon>
        <taxon>eudicotyledons</taxon>
        <taxon>Gunneridae</taxon>
        <taxon>Pentapetalae</taxon>
        <taxon>rosids</taxon>
        <taxon>malvids</taxon>
        <taxon>Brassicales</taxon>
        <taxon>Brassicaceae</taxon>
        <taxon>Camelineae</taxon>
        <taxon>Arabidopsis</taxon>
    </lineage>
</organism>
<gene>
    <name type="primary">TIM22-1</name>
    <name type="synonym">MEE67</name>
    <name type="ordered locus">At3g10110</name>
    <name type="ORF">T22K18.6</name>
</gene>
<comment type="function">
    <text evidence="6">Essential core component of the TIM22 complex, a complex that mediates the import and insertion of multi-pass transmembrane proteins into the mitochondrial inner membrane.</text>
</comment>
<comment type="subcellular location">
    <subcellularLocation>
        <location evidence="7">Mitochondrion inner membrane</location>
        <topology evidence="7">Multi-pass membrane protein</topology>
    </subcellularLocation>
</comment>
<comment type="tissue specificity">
    <text evidence="3 4">Expressed in young cotyledons, roots, flowers and leaves.</text>
</comment>
<comment type="induction">
    <text evidence="4">Up-regulated after antimycin A or rotenone treatments.</text>
</comment>
<comment type="disruption phenotype">
    <text evidence="5">Embryo lethality.</text>
</comment>
<comment type="similarity">
    <text evidence="7">Belongs to the Tim17/Tim22/Tim23 family.</text>
</comment>
<comment type="sequence caution" evidence="7">
    <conflict type="erroneous gene model prediction">
        <sequence resource="EMBL-CDS" id="AAF04413"/>
    </conflict>
</comment>
<protein>
    <recommendedName>
        <fullName>Mitochondrial import inner membrane translocase subunit TIM22-1</fullName>
    </recommendedName>
    <alternativeName>
        <fullName>Protein MATERNAL EFFECT EMBRYO ARREST 67</fullName>
    </alternativeName>
</protein>
<dbReference type="EMBL" id="DQ405268">
    <property type="protein sequence ID" value="ABD64057.1"/>
    <property type="molecule type" value="mRNA"/>
</dbReference>
<dbReference type="EMBL" id="DQ405269">
    <property type="protein sequence ID" value="ABD64058.1"/>
    <property type="molecule type" value="mRNA"/>
</dbReference>
<dbReference type="EMBL" id="AC010927">
    <property type="protein sequence ID" value="AAF04413.1"/>
    <property type="status" value="ALT_SEQ"/>
    <property type="molecule type" value="Genomic_DNA"/>
</dbReference>
<dbReference type="EMBL" id="CP002686">
    <property type="protein sequence ID" value="AEE74859.1"/>
    <property type="molecule type" value="Genomic_DNA"/>
</dbReference>
<dbReference type="EMBL" id="BT030038">
    <property type="protein sequence ID" value="ABN04776.1"/>
    <property type="molecule type" value="mRNA"/>
</dbReference>
<dbReference type="RefSeq" id="NP_566368.1">
    <property type="nucleotide sequence ID" value="NM_111846.3"/>
</dbReference>
<dbReference type="SMR" id="A2RVP7"/>
<dbReference type="FunCoup" id="A2RVP7">
    <property type="interactions" value="3706"/>
</dbReference>
<dbReference type="STRING" id="3702.A2RVP7"/>
<dbReference type="TCDB" id="3.A.8.1.3">
    <property type="family name" value="the mitochondrial protein translocase (mpt) family"/>
</dbReference>
<dbReference type="GlyGen" id="A2RVP7">
    <property type="glycosylation" value="1 site"/>
</dbReference>
<dbReference type="PaxDb" id="3702-AT3G10110.1"/>
<dbReference type="EnsemblPlants" id="AT3G10110.1">
    <property type="protein sequence ID" value="AT3G10110.1"/>
    <property type="gene ID" value="AT3G10110"/>
</dbReference>
<dbReference type="GeneID" id="820172"/>
<dbReference type="Gramene" id="AT3G10110.1">
    <property type="protein sequence ID" value="AT3G10110.1"/>
    <property type="gene ID" value="AT3G10110"/>
</dbReference>
<dbReference type="KEGG" id="ath:AT3G10110"/>
<dbReference type="Araport" id="AT3G10110"/>
<dbReference type="TAIR" id="AT3G10110">
    <property type="gene designation" value="MEE67"/>
</dbReference>
<dbReference type="eggNOG" id="KOG3225">
    <property type="taxonomic scope" value="Eukaryota"/>
</dbReference>
<dbReference type="HOGENOM" id="CLU_091077_2_0_1"/>
<dbReference type="InParanoid" id="A2RVP7"/>
<dbReference type="OMA" id="VNPNMAD"/>
<dbReference type="OrthoDB" id="75343at2759"/>
<dbReference type="PhylomeDB" id="A2RVP7"/>
<dbReference type="PRO" id="PR:A2RVP7"/>
<dbReference type="Proteomes" id="UP000006548">
    <property type="component" value="Chromosome 3"/>
</dbReference>
<dbReference type="ExpressionAtlas" id="A2RVP7">
    <property type="expression patterns" value="baseline and differential"/>
</dbReference>
<dbReference type="GO" id="GO:0042721">
    <property type="term" value="C:TIM22 mitochondrial import inner membrane insertion complex"/>
    <property type="evidence" value="ECO:0007669"/>
    <property type="project" value="InterPro"/>
</dbReference>
<dbReference type="GO" id="GO:0009793">
    <property type="term" value="P:embryo development ending in seed dormancy"/>
    <property type="evidence" value="ECO:0000315"/>
    <property type="project" value="TAIR"/>
</dbReference>
<dbReference type="GO" id="GO:0045039">
    <property type="term" value="P:protein insertion into mitochondrial inner membrane"/>
    <property type="evidence" value="ECO:0007669"/>
    <property type="project" value="InterPro"/>
</dbReference>
<dbReference type="InterPro" id="IPR039175">
    <property type="entry name" value="TIM22"/>
</dbReference>
<dbReference type="PANTHER" id="PTHR14110">
    <property type="entry name" value="MITOCHONDRIAL IMPORT INNER MEMBRANE TRANSLOCASE SUBUNIT TIM22"/>
    <property type="match status" value="1"/>
</dbReference>
<dbReference type="PANTHER" id="PTHR14110:SF0">
    <property type="entry name" value="MITOCHONDRIAL IMPORT INNER MEMBRANE TRANSLOCASE SUBUNIT TIM22"/>
    <property type="match status" value="1"/>
</dbReference>
<dbReference type="Pfam" id="PF02466">
    <property type="entry name" value="Tim17"/>
    <property type="match status" value="1"/>
</dbReference>
<feature type="transit peptide" description="Mitochondrion" evidence="1">
    <location>
        <begin position="1"/>
        <end position="18"/>
    </location>
</feature>
<feature type="chain" id="PRO_0000420934" description="Mitochondrial import inner membrane translocase subunit TIM22-1">
    <location>
        <begin position="19"/>
        <end position="173"/>
    </location>
</feature>
<feature type="transmembrane region" description="Helical" evidence="1">
    <location>
        <begin position="52"/>
        <end position="72"/>
    </location>
</feature>
<feature type="transmembrane region" description="Helical" evidence="1">
    <location>
        <begin position="101"/>
        <end position="119"/>
    </location>
</feature>
<feature type="transmembrane region" description="Helical" evidence="1">
    <location>
        <begin position="128"/>
        <end position="144"/>
    </location>
</feature>
<feature type="transmembrane region" description="Helical" evidence="1">
    <location>
        <begin position="151"/>
        <end position="168"/>
    </location>
</feature>
<feature type="region of interest" description="Disordered" evidence="2">
    <location>
        <begin position="1"/>
        <end position="26"/>
    </location>
</feature>
<feature type="sequence conflict" description="In Ref. 1; ABD64057/ABD64058." evidence="7" ref="1">
    <original>P</original>
    <variation>T</variation>
    <location>
        <position position="9"/>
    </location>
</feature>
<accession>A2RVP7</accession>
<accession>Q9SR75</accession>
<proteinExistence type="evidence at protein level"/>
<keyword id="KW-0472">Membrane</keyword>
<keyword id="KW-0496">Mitochondrion</keyword>
<keyword id="KW-0999">Mitochondrion inner membrane</keyword>
<keyword id="KW-1185">Reference proteome</keyword>
<keyword id="KW-0809">Transit peptide</keyword>
<keyword id="KW-0812">Transmembrane</keyword>
<keyword id="KW-1133">Transmembrane helix</keyword>
<evidence type="ECO:0000255" key="1"/>
<evidence type="ECO:0000256" key="2">
    <source>
        <dbReference type="SAM" id="MobiDB-lite"/>
    </source>
</evidence>
<evidence type="ECO:0000269" key="3">
    <source>
    </source>
</evidence>
<evidence type="ECO:0000269" key="4">
    <source>
    </source>
</evidence>
<evidence type="ECO:0000269" key="5">
    <source>
    </source>
</evidence>
<evidence type="ECO:0000269" key="6">
    <source>
    </source>
</evidence>
<evidence type="ECO:0000305" key="7"/>
<sequence>MADSSAAEPTTGASSPPVASDENSTQIQPIRMPTIEEIRAQEVWNNCAVRAVTSGVMGGGLGLMMGLFLGALDNPITHDTMTARQQFVFTAKQMGQRSWNSCKTFAVMGLVFSAAECIVEKARAKHDTVNTAIAGCVTGGSMSARGGPKAACIGCAGFATFSVLIEKFFDRHT</sequence>